<evidence type="ECO:0000255" key="1">
    <source>
        <dbReference type="HAMAP-Rule" id="MF_00478"/>
    </source>
</evidence>
<protein>
    <recommendedName>
        <fullName evidence="1">Ion-translocating oxidoreductase complex subunit E</fullName>
        <ecNumber evidence="1">7.-.-.-</ecNumber>
    </recommendedName>
    <alternativeName>
        <fullName evidence="1">Rsx electron transport complex subunit E</fullName>
    </alternativeName>
</protein>
<keyword id="KW-0997">Cell inner membrane</keyword>
<keyword id="KW-1003">Cell membrane</keyword>
<keyword id="KW-0249">Electron transport</keyword>
<keyword id="KW-0472">Membrane</keyword>
<keyword id="KW-1278">Translocase</keyword>
<keyword id="KW-0812">Transmembrane</keyword>
<keyword id="KW-1133">Transmembrane helix</keyword>
<keyword id="KW-0813">Transport</keyword>
<gene>
    <name evidence="1" type="primary">rsxE</name>
    <name type="ordered locus">ECDH10B_1766</name>
</gene>
<organism>
    <name type="scientific">Escherichia coli (strain K12 / DH10B)</name>
    <dbReference type="NCBI Taxonomy" id="316385"/>
    <lineage>
        <taxon>Bacteria</taxon>
        <taxon>Pseudomonadati</taxon>
        <taxon>Pseudomonadota</taxon>
        <taxon>Gammaproteobacteria</taxon>
        <taxon>Enterobacterales</taxon>
        <taxon>Enterobacteriaceae</taxon>
        <taxon>Escherichia</taxon>
    </lineage>
</organism>
<reference key="1">
    <citation type="journal article" date="2008" name="J. Bacteriol.">
        <title>The complete genome sequence of Escherichia coli DH10B: insights into the biology of a laboratory workhorse.</title>
        <authorList>
            <person name="Durfee T."/>
            <person name="Nelson R."/>
            <person name="Baldwin S."/>
            <person name="Plunkett G. III"/>
            <person name="Burland V."/>
            <person name="Mau B."/>
            <person name="Petrosino J.F."/>
            <person name="Qin X."/>
            <person name="Muzny D.M."/>
            <person name="Ayele M."/>
            <person name="Gibbs R.A."/>
            <person name="Csorgo B."/>
            <person name="Posfai G."/>
            <person name="Weinstock G.M."/>
            <person name="Blattner F.R."/>
        </authorList>
    </citation>
    <scope>NUCLEOTIDE SEQUENCE [LARGE SCALE GENOMIC DNA]</scope>
    <source>
        <strain>K12 / DH10B</strain>
    </source>
</reference>
<dbReference type="EC" id="7.-.-.-" evidence="1"/>
<dbReference type="EMBL" id="CP000948">
    <property type="protein sequence ID" value="ACB02838.1"/>
    <property type="molecule type" value="Genomic_DNA"/>
</dbReference>
<dbReference type="RefSeq" id="WP_001289652.1">
    <property type="nucleotide sequence ID" value="NC_010473.1"/>
</dbReference>
<dbReference type="SMR" id="B1XFU4"/>
<dbReference type="KEGG" id="ecd:ECDH10B_1766"/>
<dbReference type="HOGENOM" id="CLU_046659_1_0_6"/>
<dbReference type="GO" id="GO:0005886">
    <property type="term" value="C:plasma membrane"/>
    <property type="evidence" value="ECO:0007669"/>
    <property type="project" value="UniProtKB-SubCell"/>
</dbReference>
<dbReference type="GO" id="GO:0022900">
    <property type="term" value="P:electron transport chain"/>
    <property type="evidence" value="ECO:0007669"/>
    <property type="project" value="UniProtKB-UniRule"/>
</dbReference>
<dbReference type="HAMAP" id="MF_00478">
    <property type="entry name" value="RsxE_RnfE"/>
    <property type="match status" value="1"/>
</dbReference>
<dbReference type="InterPro" id="IPR003667">
    <property type="entry name" value="NqrDE/RnfAE"/>
</dbReference>
<dbReference type="InterPro" id="IPR010968">
    <property type="entry name" value="RnfE"/>
</dbReference>
<dbReference type="NCBIfam" id="NF009070">
    <property type="entry name" value="PRK12405.1"/>
    <property type="match status" value="1"/>
</dbReference>
<dbReference type="NCBIfam" id="TIGR01948">
    <property type="entry name" value="rnfE"/>
    <property type="match status" value="1"/>
</dbReference>
<dbReference type="PANTHER" id="PTHR30586">
    <property type="entry name" value="ELECTRON TRANSPORT COMPLEX PROTEIN RNFE"/>
    <property type="match status" value="1"/>
</dbReference>
<dbReference type="PANTHER" id="PTHR30586:SF0">
    <property type="entry name" value="ION-TRANSLOCATING OXIDOREDUCTASE COMPLEX SUBUNIT E"/>
    <property type="match status" value="1"/>
</dbReference>
<dbReference type="Pfam" id="PF02508">
    <property type="entry name" value="Rnf-Nqr"/>
    <property type="match status" value="1"/>
</dbReference>
<dbReference type="PIRSF" id="PIRSF006102">
    <property type="entry name" value="NQR_DE"/>
    <property type="match status" value="1"/>
</dbReference>
<feature type="chain" id="PRO_1000125850" description="Ion-translocating oxidoreductase complex subunit E">
    <location>
        <begin position="1"/>
        <end position="231"/>
    </location>
</feature>
<feature type="transmembrane region" description="Helical" evidence="1">
    <location>
        <begin position="18"/>
        <end position="38"/>
    </location>
</feature>
<feature type="transmembrane region" description="Helical" evidence="1">
    <location>
        <begin position="39"/>
        <end position="59"/>
    </location>
</feature>
<feature type="transmembrane region" description="Helical" evidence="1">
    <location>
        <begin position="63"/>
        <end position="83"/>
    </location>
</feature>
<feature type="transmembrane region" description="Helical" evidence="1">
    <location>
        <begin position="86"/>
        <end position="106"/>
    </location>
</feature>
<feature type="transmembrane region" description="Helical" evidence="1">
    <location>
        <begin position="125"/>
        <end position="145"/>
    </location>
</feature>
<feature type="transmembrane region" description="Helical" evidence="1">
    <location>
        <begin position="182"/>
        <end position="202"/>
    </location>
</feature>
<proteinExistence type="inferred from homology"/>
<accession>B1XFU4</accession>
<comment type="function">
    <text evidence="1">Part of a membrane-bound complex that couples electron transfer with translocation of ions across the membrane. Required to maintain the reduced state of SoxR.</text>
</comment>
<comment type="subunit">
    <text evidence="1">The complex is composed of six subunits: RsxA, RsxB, RsxC, RsxD, RsxE and RsxG.</text>
</comment>
<comment type="subcellular location">
    <subcellularLocation>
        <location evidence="1">Cell inner membrane</location>
        <topology evidence="1">Multi-pass membrane protein</topology>
    </subcellularLocation>
</comment>
<comment type="similarity">
    <text evidence="1">Belongs to the NqrDE/RnfAE family.</text>
</comment>
<name>RSXE_ECODH</name>
<sequence>MSEIKDVIVQGLWKNNSALVQLLGLCPLLAVTSTATNALGLGLATTLVLTLTNLTISTLRHWTPAEIRIPIYVMIIASVVSAVQMLINAYAFGLYQSLGIFIPLIVTNCIVVGRAEAFAAKKGPALSALDGFSIGMGATCAMFVLGSLREIIGNGTLFDGADALLGSWAKVLRVEIFHTDSPFLLAMLPPGAFIGLGLMLAGKYLIDERMKKRRAEAAAERALPNGETGNV</sequence>